<reference key="1">
    <citation type="journal article" date="1994" name="Microbiology">
        <title>Cloning and nucleotide sequence analysis of pepV, a carnosinase gene from Lactobacillus delbrueckii subsp. lactis DSM 7290, and partial characterization of the enzyme.</title>
        <authorList>
            <person name="Vongerichten K.F."/>
            <person name="Klein J.R."/>
            <person name="Matern H."/>
            <person name="Plapp R."/>
        </authorList>
    </citation>
    <scope>NUCLEOTIDE SEQUENCE [GENOMIC DNA]</scope>
    <scope>FUNCTION</scope>
    <scope>SUBSTRATE SPECIFICITY</scope>
    <scope>SUBCELLULAR LOCATION</scope>
    <scope>ACTIVITY REGULATION</scope>
    <source>
        <strain>DSM 7290 / WS87</strain>
    </source>
</reference>
<reference key="2">
    <citation type="journal article" date="2002" name="Structure">
        <title>Crystal structure of the dinuclear zinc aminopeptidase PepV from Lactobacillus delbrueckii unravels its preference for dipeptides.</title>
        <authorList>
            <person name="Jozic D."/>
            <person name="Bourenkow G."/>
            <person name="Bartunik H."/>
            <person name="Scholze H."/>
            <person name="Dive V."/>
            <person name="Henrich B."/>
            <person name="Huber R."/>
            <person name="Bode W."/>
            <person name="Maskos K."/>
        </authorList>
    </citation>
    <scope>X-RAY CRYSTALLOGRAPHY (1.8 ANGSTROMS) IN COMPLEX WITH SUBSTRATE ANALOG AND ZINC</scope>
    <scope>COFACTOR</scope>
</reference>
<protein>
    <recommendedName>
        <fullName>Beta-Ala-Xaa dipeptidase</fullName>
        <ecNumber>3.4.13.-</ecNumber>
    </recommendedName>
    <alternativeName>
        <fullName>Beta-Ala-His dipeptidase</fullName>
    </alternativeName>
    <alternativeName>
        <fullName>Peptidase V</fullName>
    </alternativeName>
</protein>
<name>PEPV_LACDL</name>
<keyword id="KW-0002">3D-structure</keyword>
<keyword id="KW-0963">Cytoplasm</keyword>
<keyword id="KW-0224">Dipeptidase</keyword>
<keyword id="KW-0378">Hydrolase</keyword>
<keyword id="KW-0479">Metal-binding</keyword>
<keyword id="KW-0482">Metalloprotease</keyword>
<keyword id="KW-0645">Protease</keyword>
<keyword id="KW-0862">Zinc</keyword>
<organism>
    <name type="scientific">Lactobacillus delbrueckii subsp. lactis</name>
    <dbReference type="NCBI Taxonomy" id="29397"/>
    <lineage>
        <taxon>Bacteria</taxon>
        <taxon>Bacillati</taxon>
        <taxon>Bacillota</taxon>
        <taxon>Bacilli</taxon>
        <taxon>Lactobacillales</taxon>
        <taxon>Lactobacillaceae</taxon>
        <taxon>Lactobacillus</taxon>
    </lineage>
</organism>
<dbReference type="EC" id="3.4.13.-"/>
<dbReference type="EMBL" id="Z31377">
    <property type="protein sequence ID" value="CAA83252.1"/>
    <property type="molecule type" value="Genomic_DNA"/>
</dbReference>
<dbReference type="PIR" id="S57902">
    <property type="entry name" value="S57902"/>
</dbReference>
<dbReference type="PDB" id="1LFW">
    <property type="method" value="X-ray"/>
    <property type="resolution" value="1.80 A"/>
    <property type="chains" value="A=1-470"/>
</dbReference>
<dbReference type="PDBsum" id="1LFW"/>
<dbReference type="SMR" id="P45494"/>
<dbReference type="DrugBank" id="DB03340">
    <property type="generic name" value="3-[(1-Amino-2-Carboxy-Ethyl)-Hydroxy-Phosphinoyl]-2-Methyl-Propionic Acid"/>
</dbReference>
<dbReference type="MEROPS" id="M20.004"/>
<dbReference type="EvolutionaryTrace" id="P45494"/>
<dbReference type="GO" id="GO:0005737">
    <property type="term" value="C:cytoplasm"/>
    <property type="evidence" value="ECO:0007669"/>
    <property type="project" value="UniProtKB-SubCell"/>
</dbReference>
<dbReference type="GO" id="GO:0008777">
    <property type="term" value="F:acetylornithine deacetylase activity"/>
    <property type="evidence" value="ECO:0007669"/>
    <property type="project" value="TreeGrafter"/>
</dbReference>
<dbReference type="GO" id="GO:0016805">
    <property type="term" value="F:dipeptidase activity"/>
    <property type="evidence" value="ECO:0007669"/>
    <property type="project" value="UniProtKB-KW"/>
</dbReference>
<dbReference type="GO" id="GO:0008237">
    <property type="term" value="F:metallopeptidase activity"/>
    <property type="evidence" value="ECO:0007669"/>
    <property type="project" value="UniProtKB-KW"/>
</dbReference>
<dbReference type="GO" id="GO:0008270">
    <property type="term" value="F:zinc ion binding"/>
    <property type="evidence" value="ECO:0007669"/>
    <property type="project" value="InterPro"/>
</dbReference>
<dbReference type="GO" id="GO:0006526">
    <property type="term" value="P:L-arginine biosynthetic process"/>
    <property type="evidence" value="ECO:0007669"/>
    <property type="project" value="TreeGrafter"/>
</dbReference>
<dbReference type="GO" id="GO:0006508">
    <property type="term" value="P:proteolysis"/>
    <property type="evidence" value="ECO:0007669"/>
    <property type="project" value="UniProtKB-KW"/>
</dbReference>
<dbReference type="CDD" id="cd03888">
    <property type="entry name" value="M20_PepV"/>
    <property type="match status" value="1"/>
</dbReference>
<dbReference type="Gene3D" id="3.30.70.360">
    <property type="match status" value="2"/>
</dbReference>
<dbReference type="Gene3D" id="3.40.630.10">
    <property type="entry name" value="Zn peptidases"/>
    <property type="match status" value="1"/>
</dbReference>
<dbReference type="InterPro" id="IPR001261">
    <property type="entry name" value="ArgE/DapE_CS"/>
</dbReference>
<dbReference type="InterPro" id="IPR036264">
    <property type="entry name" value="Bact_exopeptidase_dim_dom"/>
</dbReference>
<dbReference type="InterPro" id="IPR010964">
    <property type="entry name" value="M20A_pepV-rel"/>
</dbReference>
<dbReference type="InterPro" id="IPR011291">
    <property type="entry name" value="Pept_M20A_peptidaseV"/>
</dbReference>
<dbReference type="InterPro" id="IPR002933">
    <property type="entry name" value="Peptidase_M20"/>
</dbReference>
<dbReference type="InterPro" id="IPR050072">
    <property type="entry name" value="Peptidase_M20A"/>
</dbReference>
<dbReference type="NCBIfam" id="TIGR01886">
    <property type="entry name" value="dipeptidase"/>
    <property type="match status" value="1"/>
</dbReference>
<dbReference type="NCBIfam" id="TIGR01887">
    <property type="entry name" value="dipeptidaselike"/>
    <property type="match status" value="1"/>
</dbReference>
<dbReference type="NCBIfam" id="NF005591">
    <property type="entry name" value="PRK07318.1"/>
    <property type="match status" value="1"/>
</dbReference>
<dbReference type="PANTHER" id="PTHR43808">
    <property type="entry name" value="ACETYLORNITHINE DEACETYLASE"/>
    <property type="match status" value="1"/>
</dbReference>
<dbReference type="PANTHER" id="PTHR43808:SF31">
    <property type="entry name" value="N-ACETYL-L-CITRULLINE DEACETYLASE"/>
    <property type="match status" value="1"/>
</dbReference>
<dbReference type="Pfam" id="PF01546">
    <property type="entry name" value="Peptidase_M20"/>
    <property type="match status" value="1"/>
</dbReference>
<dbReference type="SUPFAM" id="SSF55031">
    <property type="entry name" value="Bacterial exopeptidase dimerisation domain"/>
    <property type="match status" value="1"/>
</dbReference>
<dbReference type="SUPFAM" id="SSF53187">
    <property type="entry name" value="Zn-dependent exopeptidases"/>
    <property type="match status" value="1"/>
</dbReference>
<dbReference type="PROSITE" id="PS00758">
    <property type="entry name" value="ARGE_DAPE_CPG2_1"/>
    <property type="match status" value="1"/>
</dbReference>
<dbReference type="PROSITE" id="PS00759">
    <property type="entry name" value="ARGE_DAPE_CPG2_2"/>
    <property type="match status" value="1"/>
</dbReference>
<proteinExistence type="evidence at protein level"/>
<evidence type="ECO:0000250" key="1"/>
<evidence type="ECO:0000269" key="2">
    <source>
    </source>
</evidence>
<evidence type="ECO:0000269" key="3">
    <source>
    </source>
</evidence>
<evidence type="ECO:0000305" key="4"/>
<evidence type="ECO:0000305" key="5">
    <source>
    </source>
</evidence>
<evidence type="ECO:0007829" key="6">
    <source>
        <dbReference type="PDB" id="1LFW"/>
    </source>
</evidence>
<gene>
    <name type="primary">pepV</name>
</gene>
<accession>P45494</accession>
<comment type="function">
    <text evidence="3">Is a relatively unspecific dipeptidase cleaving a variety of dipeptides, notably those with an N-terminal beta-Ala or D-Ala residue, e.g. carnosine (beta-Ala-His). To a lesser extent, also shows aminopeptidase activity, since it is able to catalyze the removal of the N-terminal amino acid from a few distinct tripeptides.</text>
</comment>
<comment type="cofactor">
    <cofactor evidence="2">
        <name>Zn(2+)</name>
        <dbReference type="ChEBI" id="CHEBI:29105"/>
    </cofactor>
    <text evidence="2">Binds 2 Zn(2+) ions per subunit. These two catalytic ions are both involved in the stabilization of the tetrahedral intermediate and in the activation of the catalytic water molecule.</text>
</comment>
<comment type="activity regulation">
    <text evidence="3">Fully inhibited by 1,10-phenanthroline or EDTA.</text>
</comment>
<comment type="subcellular location">
    <subcellularLocation>
        <location evidence="5">Cytoplasm</location>
    </subcellularLocation>
</comment>
<comment type="similarity">
    <text evidence="4">Belongs to the peptidase M20A family.</text>
</comment>
<feature type="chain" id="PRO_0000185276" description="Beta-Ala-Xaa dipeptidase">
    <location>
        <begin position="1"/>
        <end position="470"/>
    </location>
</feature>
<feature type="active site" evidence="1">
    <location>
        <position position="89"/>
    </location>
</feature>
<feature type="active site" description="Proton acceptor" evidence="4">
    <location>
        <position position="153"/>
    </location>
</feature>
<feature type="binding site" evidence="2">
    <location>
        <position position="87"/>
    </location>
    <ligand>
        <name>Zn(2+)</name>
        <dbReference type="ChEBI" id="CHEBI:29105"/>
        <label>2</label>
    </ligand>
</feature>
<feature type="binding site" evidence="2">
    <location>
        <position position="119"/>
    </location>
    <ligand>
        <name>Zn(2+)</name>
        <dbReference type="ChEBI" id="CHEBI:29105"/>
        <label>1</label>
    </ligand>
</feature>
<feature type="binding site" evidence="2">
    <location>
        <position position="119"/>
    </location>
    <ligand>
        <name>Zn(2+)</name>
        <dbReference type="ChEBI" id="CHEBI:29105"/>
        <label>2</label>
    </ligand>
</feature>
<feature type="binding site" evidence="2">
    <location>
        <position position="154"/>
    </location>
    <ligand>
        <name>Zn(2+)</name>
        <dbReference type="ChEBI" id="CHEBI:29105"/>
        <label>1</label>
    </ligand>
</feature>
<feature type="binding site" evidence="2">
    <location>
        <position position="177"/>
    </location>
    <ligand>
        <name>Zn(2+)</name>
        <dbReference type="ChEBI" id="CHEBI:29105"/>
        <label>2</label>
    </ligand>
</feature>
<feature type="binding site">
    <location>
        <position position="350"/>
    </location>
    <ligand>
        <name>substrate</name>
    </ligand>
</feature>
<feature type="binding site" evidence="2">
    <location>
        <position position="439"/>
    </location>
    <ligand>
        <name>Zn(2+)</name>
        <dbReference type="ChEBI" id="CHEBI:29105"/>
        <label>1</label>
    </ligand>
</feature>
<feature type="helix" evidence="6">
    <location>
        <begin position="5"/>
        <end position="10"/>
    </location>
</feature>
<feature type="helix" evidence="6">
    <location>
        <begin position="13"/>
        <end position="24"/>
    </location>
</feature>
<feature type="helix" evidence="6">
    <location>
        <begin position="32"/>
        <end position="34"/>
    </location>
</feature>
<feature type="strand" evidence="6">
    <location>
        <begin position="37"/>
        <end position="39"/>
    </location>
</feature>
<feature type="helix" evidence="6">
    <location>
        <begin position="43"/>
        <end position="58"/>
    </location>
</feature>
<feature type="strand" evidence="6">
    <location>
        <begin position="62"/>
        <end position="66"/>
    </location>
</feature>
<feature type="turn" evidence="6">
    <location>
        <begin position="67"/>
        <end position="69"/>
    </location>
</feature>
<feature type="strand" evidence="6">
    <location>
        <begin position="70"/>
        <end position="75"/>
    </location>
</feature>
<feature type="strand" evidence="6">
    <location>
        <begin position="79"/>
        <end position="87"/>
    </location>
</feature>
<feature type="strand" evidence="6">
    <location>
        <begin position="111"/>
        <end position="114"/>
    </location>
</feature>
<feature type="strand" evidence="6">
    <location>
        <begin position="117"/>
        <end position="120"/>
    </location>
</feature>
<feature type="helix" evidence="6">
    <location>
        <begin position="121"/>
        <end position="137"/>
    </location>
</feature>
<feature type="strand" evidence="6">
    <location>
        <begin position="142"/>
        <end position="151"/>
    </location>
</feature>
<feature type="turn" evidence="6">
    <location>
        <begin position="153"/>
        <end position="156"/>
    </location>
</feature>
<feature type="helix" evidence="6">
    <location>
        <begin position="158"/>
        <end position="166"/>
    </location>
</feature>
<feature type="strand" evidence="6">
    <location>
        <begin position="171"/>
        <end position="186"/>
    </location>
</feature>
<feature type="strand" evidence="6">
    <location>
        <begin position="188"/>
        <end position="196"/>
    </location>
</feature>
<feature type="strand" evidence="6">
    <location>
        <begin position="204"/>
        <end position="212"/>
    </location>
</feature>
<feature type="strand" evidence="6">
    <location>
        <begin position="221"/>
        <end position="228"/>
    </location>
</feature>
<feature type="helix" evidence="6">
    <location>
        <begin position="232"/>
        <end position="246"/>
    </location>
</feature>
<feature type="strand" evidence="6">
    <location>
        <begin position="249"/>
        <end position="255"/>
    </location>
</feature>
<feature type="strand" evidence="6">
    <location>
        <begin position="258"/>
        <end position="264"/>
    </location>
</feature>
<feature type="helix" evidence="6">
    <location>
        <begin position="273"/>
        <end position="275"/>
    </location>
</feature>
<feature type="helix" evidence="6">
    <location>
        <begin position="279"/>
        <end position="287"/>
    </location>
</feature>
<feature type="helix" evidence="6">
    <location>
        <begin position="294"/>
        <end position="305"/>
    </location>
</feature>
<feature type="turn" evidence="6">
    <location>
        <begin position="306"/>
        <end position="309"/>
    </location>
</feature>
<feature type="turn" evidence="6">
    <location>
        <begin position="314"/>
        <end position="317"/>
    </location>
</feature>
<feature type="turn" evidence="6">
    <location>
        <begin position="323"/>
        <end position="325"/>
    </location>
</feature>
<feature type="strand" evidence="6">
    <location>
        <begin position="329"/>
        <end position="338"/>
    </location>
</feature>
<feature type="strand" evidence="6">
    <location>
        <begin position="343"/>
        <end position="351"/>
    </location>
</feature>
<feature type="helix" evidence="6">
    <location>
        <begin position="357"/>
        <end position="368"/>
    </location>
</feature>
<feature type="turn" evidence="6">
    <location>
        <begin position="369"/>
        <end position="371"/>
    </location>
</feature>
<feature type="strand" evidence="6">
    <location>
        <begin position="372"/>
        <end position="375"/>
    </location>
</feature>
<feature type="helix" evidence="6">
    <location>
        <begin position="390"/>
        <end position="403"/>
    </location>
</feature>
<feature type="strand" evidence="6">
    <location>
        <begin position="409"/>
        <end position="414"/>
    </location>
</feature>
<feature type="helix" evidence="6">
    <location>
        <begin position="417"/>
        <end position="420"/>
    </location>
</feature>
<feature type="strand" evidence="6">
    <location>
        <begin position="444"/>
        <end position="446"/>
    </location>
</feature>
<feature type="helix" evidence="6">
    <location>
        <begin position="447"/>
        <end position="465"/>
    </location>
</feature>
<sequence length="470" mass="51990">MDLNFKELAEAKKDAILKDLEELIAIDSSEDLENATEEYPVGKGPVDAMTKFLSFAKRDGFDTENFANYAGRVNFGAGDKRLGIIGHMDVVPAGEGWTRDPFKMEIDEEGRIYGRGSADDKGPSLTAYYGMLLLKEAGFKPKKKIDFVLGTNEETNWVGIDYYLKHEPTPDIVFSPDAEYPIINGEQGIFTLEFSFKNDDTKGDYVLDKFKAGIATNVTPQVTRATISGPDLEAVKLAYESFLADKELDGSFEINDESADIVLIGQGAHASAPQVGKNSATFLALFLDQYAFAGRDKNFLHFLAEVEHEDFYGKKLGIFHHDDLMGDLASSPSMFDYEHAGKASLLNNVRYPQGTDPDTMIKQVLDKFSGILDVTYNGFEEPHYVPGSDPMVQTLLKVYEKQTGKPGHEVVIGGGTYGRLFERGVAFGAQPENGPMVMHAANEFMMLDDLILSIAIYAEAIYELTKDEEL</sequence>